<comment type="function">
    <text evidence="1">Involved in nucleotide metabolism via production of dUMP, the immediate precursor of thymidine nucleotides, and decreases the intracellular concentration of dUTP so that uracil cannot be incorporated into DNA.</text>
</comment>
<comment type="catalytic activity">
    <reaction evidence="1">
        <text>dUTP + H2O = dUMP + diphosphate + H(+)</text>
        <dbReference type="Rhea" id="RHEA:10248"/>
        <dbReference type="ChEBI" id="CHEBI:15377"/>
        <dbReference type="ChEBI" id="CHEBI:15378"/>
        <dbReference type="ChEBI" id="CHEBI:33019"/>
        <dbReference type="ChEBI" id="CHEBI:61555"/>
        <dbReference type="ChEBI" id="CHEBI:246422"/>
        <dbReference type="EC" id="3.6.1.23"/>
    </reaction>
    <physiologicalReaction direction="left-to-right" evidence="1">
        <dbReference type="Rhea" id="RHEA:10249"/>
    </physiologicalReaction>
</comment>
<comment type="cofactor">
    <cofactor evidence="1">
        <name>Mg(2+)</name>
        <dbReference type="ChEBI" id="CHEBI:18420"/>
    </cofactor>
</comment>
<comment type="pathway">
    <text>Pyrimidine metabolism; dUMP biosynthesis; dUMP from dCTP (dUTP route): step 2/2.</text>
</comment>
<comment type="subunit">
    <text evidence="1">Homotrimer.</text>
</comment>
<comment type="similarity">
    <text evidence="2">Belongs to the dUTPase family.</text>
</comment>
<reference key="1">
    <citation type="journal article" date="2004" name="Nature">
        <title>Genome evolution in yeasts.</title>
        <authorList>
            <person name="Dujon B."/>
            <person name="Sherman D."/>
            <person name="Fischer G."/>
            <person name="Durrens P."/>
            <person name="Casaregola S."/>
            <person name="Lafontaine I."/>
            <person name="de Montigny J."/>
            <person name="Marck C."/>
            <person name="Neuveglise C."/>
            <person name="Talla E."/>
            <person name="Goffard N."/>
            <person name="Frangeul L."/>
            <person name="Aigle M."/>
            <person name="Anthouard V."/>
            <person name="Babour A."/>
            <person name="Barbe V."/>
            <person name="Barnay S."/>
            <person name="Blanchin S."/>
            <person name="Beckerich J.-M."/>
            <person name="Beyne E."/>
            <person name="Bleykasten C."/>
            <person name="Boisrame A."/>
            <person name="Boyer J."/>
            <person name="Cattolico L."/>
            <person name="Confanioleri F."/>
            <person name="de Daruvar A."/>
            <person name="Despons L."/>
            <person name="Fabre E."/>
            <person name="Fairhead C."/>
            <person name="Ferry-Dumazet H."/>
            <person name="Groppi A."/>
            <person name="Hantraye F."/>
            <person name="Hennequin C."/>
            <person name="Jauniaux N."/>
            <person name="Joyet P."/>
            <person name="Kachouri R."/>
            <person name="Kerrest A."/>
            <person name="Koszul R."/>
            <person name="Lemaire M."/>
            <person name="Lesur I."/>
            <person name="Ma L."/>
            <person name="Muller H."/>
            <person name="Nicaud J.-M."/>
            <person name="Nikolski M."/>
            <person name="Oztas S."/>
            <person name="Ozier-Kalogeropoulos O."/>
            <person name="Pellenz S."/>
            <person name="Potier S."/>
            <person name="Richard G.-F."/>
            <person name="Straub M.-L."/>
            <person name="Suleau A."/>
            <person name="Swennen D."/>
            <person name="Tekaia F."/>
            <person name="Wesolowski-Louvel M."/>
            <person name="Westhof E."/>
            <person name="Wirth B."/>
            <person name="Zeniou-Meyer M."/>
            <person name="Zivanovic Y."/>
            <person name="Bolotin-Fukuhara M."/>
            <person name="Thierry A."/>
            <person name="Bouchier C."/>
            <person name="Caudron B."/>
            <person name="Scarpelli C."/>
            <person name="Gaillardin C."/>
            <person name="Weissenbach J."/>
            <person name="Wincker P."/>
            <person name="Souciet J.-L."/>
        </authorList>
    </citation>
    <scope>NUCLEOTIDE SEQUENCE [LARGE SCALE GENOMIC DNA]</scope>
    <source>
        <strain>ATCC 2001 / BCRC 20586 / JCM 3761 / NBRC 0622 / NRRL Y-65 / CBS 138</strain>
    </source>
</reference>
<accession>Q6FKQ6</accession>
<name>DUT_CANGA</name>
<organism>
    <name type="scientific">Candida glabrata (strain ATCC 2001 / BCRC 20586 / JCM 3761 / NBRC 0622 / NRRL Y-65 / CBS 138)</name>
    <name type="common">Yeast</name>
    <name type="synonym">Nakaseomyces glabratus</name>
    <dbReference type="NCBI Taxonomy" id="284593"/>
    <lineage>
        <taxon>Eukaryota</taxon>
        <taxon>Fungi</taxon>
        <taxon>Dikarya</taxon>
        <taxon>Ascomycota</taxon>
        <taxon>Saccharomycotina</taxon>
        <taxon>Saccharomycetes</taxon>
        <taxon>Saccharomycetales</taxon>
        <taxon>Saccharomycetaceae</taxon>
        <taxon>Nakaseomyces</taxon>
    </lineage>
</organism>
<keyword id="KW-0378">Hydrolase</keyword>
<keyword id="KW-0460">Magnesium</keyword>
<keyword id="KW-0479">Metal-binding</keyword>
<keyword id="KW-0546">Nucleotide metabolism</keyword>
<keyword id="KW-1185">Reference proteome</keyword>
<evidence type="ECO:0000250" key="1">
    <source>
        <dbReference type="UniProtKB" id="P33317"/>
    </source>
</evidence>
<evidence type="ECO:0000305" key="2"/>
<sequence>MSGNVLKVQLRSEHGIAPTKGSVYAAGYDIYASADYVIPAMGQGMVPTDISFTVPEGTYGRIAPRSGLAVKHGIQTGAGVVDRDYTGEVKIILFNHSQKDFEIKRGDRVAQLILEKIVDDAEVVVVESLEDSQRGAGGFGSTGK</sequence>
<dbReference type="EC" id="3.6.1.23" evidence="1"/>
<dbReference type="EMBL" id="CR380958">
    <property type="protein sequence ID" value="CAG62158.1"/>
    <property type="molecule type" value="Genomic_DNA"/>
</dbReference>
<dbReference type="RefSeq" id="XP_449188.1">
    <property type="nucleotide sequence ID" value="XM_449188.1"/>
</dbReference>
<dbReference type="SMR" id="Q6FKQ6"/>
<dbReference type="FunCoup" id="Q6FKQ6">
    <property type="interactions" value="1235"/>
</dbReference>
<dbReference type="STRING" id="284593.Q6FKQ6"/>
<dbReference type="EnsemblFungi" id="CAGL0L09581g-T">
    <property type="protein sequence ID" value="CAGL0L09581g-T-p1"/>
    <property type="gene ID" value="CAGL0L09581g"/>
</dbReference>
<dbReference type="KEGG" id="cgr:2891138"/>
<dbReference type="CGD" id="CAL0135636">
    <property type="gene designation" value="CAGL0L09581g"/>
</dbReference>
<dbReference type="VEuPathDB" id="FungiDB:CAGL0L09581g"/>
<dbReference type="eggNOG" id="KOG3370">
    <property type="taxonomic scope" value="Eukaryota"/>
</dbReference>
<dbReference type="HOGENOM" id="CLU_068508_2_1_1"/>
<dbReference type="InParanoid" id="Q6FKQ6"/>
<dbReference type="OMA" id="GREFHTQ"/>
<dbReference type="UniPathway" id="UPA00610">
    <property type="reaction ID" value="UER00666"/>
</dbReference>
<dbReference type="Proteomes" id="UP000002428">
    <property type="component" value="Chromosome L"/>
</dbReference>
<dbReference type="GO" id="GO:0035870">
    <property type="term" value="F:dITP diphosphatase activity"/>
    <property type="evidence" value="ECO:0007669"/>
    <property type="project" value="EnsemblFungi"/>
</dbReference>
<dbReference type="GO" id="GO:0004170">
    <property type="term" value="F:dUTP diphosphatase activity"/>
    <property type="evidence" value="ECO:0007669"/>
    <property type="project" value="UniProtKB-EC"/>
</dbReference>
<dbReference type="GO" id="GO:0000287">
    <property type="term" value="F:magnesium ion binding"/>
    <property type="evidence" value="ECO:0007669"/>
    <property type="project" value="InterPro"/>
</dbReference>
<dbReference type="GO" id="GO:0035863">
    <property type="term" value="P:dITP catabolic process"/>
    <property type="evidence" value="ECO:0007669"/>
    <property type="project" value="EnsemblFungi"/>
</dbReference>
<dbReference type="GO" id="GO:0006226">
    <property type="term" value="P:dUMP biosynthetic process"/>
    <property type="evidence" value="ECO:0007669"/>
    <property type="project" value="UniProtKB-UniPathway"/>
</dbReference>
<dbReference type="GO" id="GO:0046081">
    <property type="term" value="P:dUTP catabolic process"/>
    <property type="evidence" value="ECO:0007669"/>
    <property type="project" value="EnsemblFungi"/>
</dbReference>
<dbReference type="CDD" id="cd07557">
    <property type="entry name" value="trimeric_dUTPase"/>
    <property type="match status" value="1"/>
</dbReference>
<dbReference type="FunFam" id="2.70.40.10:FF:000007">
    <property type="entry name" value="dUTP pyrophosphatase"/>
    <property type="match status" value="1"/>
</dbReference>
<dbReference type="Gene3D" id="2.70.40.10">
    <property type="match status" value="1"/>
</dbReference>
<dbReference type="InterPro" id="IPR008181">
    <property type="entry name" value="dUTPase"/>
</dbReference>
<dbReference type="InterPro" id="IPR029054">
    <property type="entry name" value="dUTPase-like"/>
</dbReference>
<dbReference type="InterPro" id="IPR036157">
    <property type="entry name" value="dUTPase-like_sf"/>
</dbReference>
<dbReference type="InterPro" id="IPR033704">
    <property type="entry name" value="dUTPase_trimeric"/>
</dbReference>
<dbReference type="NCBIfam" id="TIGR00576">
    <property type="entry name" value="dut"/>
    <property type="match status" value="1"/>
</dbReference>
<dbReference type="NCBIfam" id="NF001862">
    <property type="entry name" value="PRK00601.1"/>
    <property type="match status" value="1"/>
</dbReference>
<dbReference type="PANTHER" id="PTHR11241">
    <property type="entry name" value="DEOXYURIDINE 5'-TRIPHOSPHATE NUCLEOTIDOHYDROLASE"/>
    <property type="match status" value="1"/>
</dbReference>
<dbReference type="PANTHER" id="PTHR11241:SF0">
    <property type="entry name" value="DEOXYURIDINE 5'-TRIPHOSPHATE NUCLEOTIDOHYDROLASE"/>
    <property type="match status" value="1"/>
</dbReference>
<dbReference type="Pfam" id="PF00692">
    <property type="entry name" value="dUTPase"/>
    <property type="match status" value="1"/>
</dbReference>
<dbReference type="SUPFAM" id="SSF51283">
    <property type="entry name" value="dUTPase-like"/>
    <property type="match status" value="1"/>
</dbReference>
<protein>
    <recommendedName>
        <fullName evidence="1">Deoxyuridine 5'-triphosphate nucleotidohydrolase</fullName>
        <shortName evidence="1">dUTPase</shortName>
        <ecNumber evidence="1">3.6.1.23</ecNumber>
    </recommendedName>
    <alternativeName>
        <fullName evidence="1">dUTP pyrophosphatase</fullName>
    </alternativeName>
</protein>
<feature type="chain" id="PRO_0000182931" description="Deoxyuridine 5'-triphosphate nucleotidohydrolase">
    <location>
        <begin position="1"/>
        <end position="144"/>
    </location>
</feature>
<feature type="binding site" evidence="1">
    <location>
        <position position="66"/>
    </location>
    <ligand>
        <name>dUMP</name>
        <dbReference type="ChEBI" id="CHEBI:246422"/>
    </ligand>
</feature>
<feature type="binding site" evidence="1">
    <location>
        <position position="79"/>
    </location>
    <ligand>
        <name>dUMP</name>
        <dbReference type="ChEBI" id="CHEBI:246422"/>
    </ligand>
</feature>
<feature type="binding site" evidence="1">
    <location>
        <position position="82"/>
    </location>
    <ligand>
        <name>dUMP</name>
        <dbReference type="ChEBI" id="CHEBI:246422"/>
    </ligand>
</feature>
<feature type="binding site" evidence="1">
    <location>
        <position position="85"/>
    </location>
    <ligand>
        <name>dUMP</name>
        <dbReference type="ChEBI" id="CHEBI:246422"/>
    </ligand>
</feature>
<feature type="binding site" evidence="1">
    <location>
        <position position="90"/>
    </location>
    <ligand>
        <name>dUMP</name>
        <dbReference type="ChEBI" id="CHEBI:246422"/>
    </ligand>
</feature>
<feature type="binding site" evidence="1">
    <location>
        <position position="134"/>
    </location>
    <ligand>
        <name>dUMP</name>
        <dbReference type="ChEBI" id="CHEBI:246422"/>
    </ligand>
</feature>
<feature type="binding site" evidence="1">
    <location>
        <position position="139"/>
    </location>
    <ligand>
        <name>dUMP</name>
        <dbReference type="ChEBI" id="CHEBI:246422"/>
    </ligand>
</feature>
<feature type="binding site" evidence="1">
    <location>
        <position position="140"/>
    </location>
    <ligand>
        <name>dUMP</name>
        <dbReference type="ChEBI" id="CHEBI:246422"/>
    </ligand>
</feature>
<proteinExistence type="inferred from homology"/>
<gene>
    <name type="primary">DUT1</name>
    <name type="ordered locus">CAGL0L09581g</name>
</gene>